<protein>
    <recommendedName>
        <fullName evidence="1">UPF0391 membrane protein BruAb1_1643</fullName>
    </recommendedName>
</protein>
<organism>
    <name type="scientific">Brucella abortus biovar 1 (strain 9-941)</name>
    <dbReference type="NCBI Taxonomy" id="262698"/>
    <lineage>
        <taxon>Bacteria</taxon>
        <taxon>Pseudomonadati</taxon>
        <taxon>Pseudomonadota</taxon>
        <taxon>Alphaproteobacteria</taxon>
        <taxon>Hyphomicrobiales</taxon>
        <taxon>Brucellaceae</taxon>
        <taxon>Brucella/Ochrobactrum group</taxon>
        <taxon>Brucella</taxon>
    </lineage>
</organism>
<dbReference type="EMBL" id="AE017223">
    <property type="protein sequence ID" value="AAX74963.1"/>
    <property type="molecule type" value="Genomic_DNA"/>
</dbReference>
<dbReference type="RefSeq" id="WP_002964748.1">
    <property type="nucleotide sequence ID" value="NC_006932.1"/>
</dbReference>
<dbReference type="EnsemblBacteria" id="AAX74963">
    <property type="protein sequence ID" value="AAX74963"/>
    <property type="gene ID" value="BruAb1_1643"/>
</dbReference>
<dbReference type="KEGG" id="bmb:BruAb1_1643"/>
<dbReference type="HOGENOM" id="CLU_187346_1_0_5"/>
<dbReference type="Proteomes" id="UP000000540">
    <property type="component" value="Chromosome I"/>
</dbReference>
<dbReference type="GO" id="GO:0005886">
    <property type="term" value="C:plasma membrane"/>
    <property type="evidence" value="ECO:0007669"/>
    <property type="project" value="UniProtKB-SubCell"/>
</dbReference>
<dbReference type="HAMAP" id="MF_01361">
    <property type="entry name" value="UPF0391"/>
    <property type="match status" value="1"/>
</dbReference>
<dbReference type="InterPro" id="IPR009760">
    <property type="entry name" value="DUF1328"/>
</dbReference>
<dbReference type="NCBIfam" id="NF010228">
    <property type="entry name" value="PRK13682.1-3"/>
    <property type="match status" value="1"/>
</dbReference>
<dbReference type="Pfam" id="PF07043">
    <property type="entry name" value="DUF1328"/>
    <property type="match status" value="1"/>
</dbReference>
<dbReference type="PIRSF" id="PIRSF036466">
    <property type="entry name" value="UCP036466"/>
    <property type="match status" value="1"/>
</dbReference>
<feature type="chain" id="PRO_0000256718" description="UPF0391 membrane protein BruAb1_1643">
    <location>
        <begin position="1"/>
        <end position="54"/>
    </location>
</feature>
<feature type="transmembrane region" description="Helical" evidence="1">
    <location>
        <begin position="5"/>
        <end position="25"/>
    </location>
</feature>
<feature type="transmembrane region" description="Helical" evidence="1">
    <location>
        <begin position="29"/>
        <end position="48"/>
    </location>
</feature>
<name>Y1643_BRUAB</name>
<proteinExistence type="inferred from homology"/>
<keyword id="KW-1003">Cell membrane</keyword>
<keyword id="KW-0472">Membrane</keyword>
<keyword id="KW-0812">Transmembrane</keyword>
<keyword id="KW-1133">Transmembrane helix</keyword>
<comment type="subcellular location">
    <subcellularLocation>
        <location evidence="1">Cell membrane</location>
        <topology evidence="1">Multi-pass membrane protein</topology>
    </subcellularLocation>
</comment>
<comment type="similarity">
    <text evidence="1">Belongs to the UPF0391 family.</text>
</comment>
<reference key="1">
    <citation type="journal article" date="2005" name="J. Bacteriol.">
        <title>Completion of the genome sequence of Brucella abortus and comparison to the highly similar genomes of Brucella melitensis and Brucella suis.</title>
        <authorList>
            <person name="Halling S.M."/>
            <person name="Peterson-Burch B.D."/>
            <person name="Bricker B.J."/>
            <person name="Zuerner R.L."/>
            <person name="Qing Z."/>
            <person name="Li L.-L."/>
            <person name="Kapur V."/>
            <person name="Alt D.P."/>
            <person name="Olsen S.C."/>
        </authorList>
    </citation>
    <scope>NUCLEOTIDE SEQUENCE [LARGE SCALE GENOMIC DNA]</scope>
    <source>
        <strain>9-941</strain>
    </source>
</reference>
<accession>Q57BM1</accession>
<evidence type="ECO:0000255" key="1">
    <source>
        <dbReference type="HAMAP-Rule" id="MF_01361"/>
    </source>
</evidence>
<sequence length="54" mass="5514">MLYYVLVFLVVALVAGALGFGGIAGASAGIAQILFFVFLALLVISLIASAIRKA</sequence>
<gene>
    <name type="ordered locus">BruAb1_1643</name>
</gene>